<proteinExistence type="inferred from homology"/>
<reference key="1">
    <citation type="journal article" date="2011" name="J. Bacteriol.">
        <title>Complete genome and proteome of Acholeplasma laidlawii.</title>
        <authorList>
            <person name="Lazarev V.N."/>
            <person name="Levitskii S.A."/>
            <person name="Basovskii Y.I."/>
            <person name="Chukin M.M."/>
            <person name="Akopian T.A."/>
            <person name="Vereshchagin V.V."/>
            <person name="Kostrjukova E.S."/>
            <person name="Kovaleva G.Y."/>
            <person name="Kazanov M.D."/>
            <person name="Malko D.B."/>
            <person name="Vitreschak A.G."/>
            <person name="Sernova N.V."/>
            <person name="Gelfand M.S."/>
            <person name="Demina I.A."/>
            <person name="Serebryakova M.V."/>
            <person name="Galyamina M.A."/>
            <person name="Vtyurin N.N."/>
            <person name="Rogov S.I."/>
            <person name="Alexeev D.G."/>
            <person name="Ladygina V.G."/>
            <person name="Govorun V.M."/>
        </authorList>
    </citation>
    <scope>NUCLEOTIDE SEQUENCE [LARGE SCALE GENOMIC DNA]</scope>
    <source>
        <strain>PG-8A</strain>
    </source>
</reference>
<dbReference type="EMBL" id="CP000896">
    <property type="protein sequence ID" value="ABX81755.1"/>
    <property type="molecule type" value="Genomic_DNA"/>
</dbReference>
<dbReference type="RefSeq" id="WP_012243086.1">
    <property type="nucleotide sequence ID" value="NC_010163.1"/>
</dbReference>
<dbReference type="SMR" id="A9NHC5"/>
<dbReference type="STRING" id="441768.ACL_1156"/>
<dbReference type="GeneID" id="41339296"/>
<dbReference type="KEGG" id="acl:ACL_1156"/>
<dbReference type="eggNOG" id="COG0264">
    <property type="taxonomic scope" value="Bacteria"/>
</dbReference>
<dbReference type="HOGENOM" id="CLU_047155_0_2_14"/>
<dbReference type="OrthoDB" id="9808348at2"/>
<dbReference type="Proteomes" id="UP000008558">
    <property type="component" value="Chromosome"/>
</dbReference>
<dbReference type="GO" id="GO:0005737">
    <property type="term" value="C:cytoplasm"/>
    <property type="evidence" value="ECO:0007669"/>
    <property type="project" value="UniProtKB-SubCell"/>
</dbReference>
<dbReference type="GO" id="GO:0003746">
    <property type="term" value="F:translation elongation factor activity"/>
    <property type="evidence" value="ECO:0007669"/>
    <property type="project" value="UniProtKB-UniRule"/>
</dbReference>
<dbReference type="CDD" id="cd14275">
    <property type="entry name" value="UBA_EF-Ts"/>
    <property type="match status" value="1"/>
</dbReference>
<dbReference type="FunFam" id="1.10.8.10:FF:000001">
    <property type="entry name" value="Elongation factor Ts"/>
    <property type="match status" value="1"/>
</dbReference>
<dbReference type="Gene3D" id="1.10.286.20">
    <property type="match status" value="1"/>
</dbReference>
<dbReference type="Gene3D" id="1.10.8.10">
    <property type="entry name" value="DNA helicase RuvA subunit, C-terminal domain"/>
    <property type="match status" value="1"/>
</dbReference>
<dbReference type="Gene3D" id="3.30.479.20">
    <property type="entry name" value="Elongation factor Ts, dimerisation domain"/>
    <property type="match status" value="2"/>
</dbReference>
<dbReference type="HAMAP" id="MF_00050">
    <property type="entry name" value="EF_Ts"/>
    <property type="match status" value="1"/>
</dbReference>
<dbReference type="InterPro" id="IPR036402">
    <property type="entry name" value="EF-Ts_dimer_sf"/>
</dbReference>
<dbReference type="InterPro" id="IPR001816">
    <property type="entry name" value="Transl_elong_EFTs/EF1B"/>
</dbReference>
<dbReference type="InterPro" id="IPR014039">
    <property type="entry name" value="Transl_elong_EFTs/EF1B_dimer"/>
</dbReference>
<dbReference type="InterPro" id="IPR018101">
    <property type="entry name" value="Transl_elong_Ts_CS"/>
</dbReference>
<dbReference type="InterPro" id="IPR009060">
    <property type="entry name" value="UBA-like_sf"/>
</dbReference>
<dbReference type="NCBIfam" id="TIGR00116">
    <property type="entry name" value="tsf"/>
    <property type="match status" value="1"/>
</dbReference>
<dbReference type="PANTHER" id="PTHR11741">
    <property type="entry name" value="ELONGATION FACTOR TS"/>
    <property type="match status" value="1"/>
</dbReference>
<dbReference type="PANTHER" id="PTHR11741:SF0">
    <property type="entry name" value="ELONGATION FACTOR TS, MITOCHONDRIAL"/>
    <property type="match status" value="1"/>
</dbReference>
<dbReference type="Pfam" id="PF00889">
    <property type="entry name" value="EF_TS"/>
    <property type="match status" value="1"/>
</dbReference>
<dbReference type="SUPFAM" id="SSF54713">
    <property type="entry name" value="Elongation factor Ts (EF-Ts), dimerisation domain"/>
    <property type="match status" value="2"/>
</dbReference>
<dbReference type="SUPFAM" id="SSF46934">
    <property type="entry name" value="UBA-like"/>
    <property type="match status" value="1"/>
</dbReference>
<dbReference type="PROSITE" id="PS01126">
    <property type="entry name" value="EF_TS_1"/>
    <property type="match status" value="1"/>
</dbReference>
<dbReference type="PROSITE" id="PS01127">
    <property type="entry name" value="EF_TS_2"/>
    <property type="match status" value="1"/>
</dbReference>
<protein>
    <recommendedName>
        <fullName evidence="1">Elongation factor Ts</fullName>
        <shortName evidence="1">EF-Ts</shortName>
    </recommendedName>
</protein>
<keyword id="KW-0963">Cytoplasm</keyword>
<keyword id="KW-0251">Elongation factor</keyword>
<keyword id="KW-0648">Protein biosynthesis</keyword>
<keyword id="KW-1185">Reference proteome</keyword>
<feature type="chain" id="PRO_1000074851" description="Elongation factor Ts">
    <location>
        <begin position="1"/>
        <end position="296"/>
    </location>
</feature>
<feature type="region of interest" description="Involved in Mg(2+) ion dislocation from EF-Tu" evidence="1">
    <location>
        <begin position="79"/>
        <end position="82"/>
    </location>
</feature>
<organism>
    <name type="scientific">Acholeplasma laidlawii (strain PG-8A)</name>
    <dbReference type="NCBI Taxonomy" id="441768"/>
    <lineage>
        <taxon>Bacteria</taxon>
        <taxon>Bacillati</taxon>
        <taxon>Mycoplasmatota</taxon>
        <taxon>Mollicutes</taxon>
        <taxon>Acholeplasmatales</taxon>
        <taxon>Acholeplasmataceae</taxon>
        <taxon>Acholeplasma</taxon>
    </lineage>
</organism>
<evidence type="ECO:0000255" key="1">
    <source>
        <dbReference type="HAMAP-Rule" id="MF_00050"/>
    </source>
</evidence>
<name>EFTS_ACHLI</name>
<gene>
    <name evidence="1" type="primary">tsf</name>
    <name type="ordered locus">ACL_1156</name>
</gene>
<sequence>MTITAAMVKELRQKTGAGMLDCKKALEETNGDIEAAATLLREKGIAKAAKKADRIAAEGLTSVVVKGNEAVLFELNSETDFVAKNKQFTDLIEELGNLFIESNVASVEEALSLKGASGKTVEEVILGATATIGEKISLRRVVRVKKTDAQGFGAYKHMGGRISVLTVLESANEELAKDLAMHITVFNPQFLSRKDVNQSTIEVETKVISEQIANDESLQGKPEKILNGILQGRLNKVLQEIVLLDQGFVKDPSITVANYLKSANNNILSYVRLEVGEGIEKKVDDFAAEVMAQVNK</sequence>
<comment type="function">
    <text evidence="1">Associates with the EF-Tu.GDP complex and induces the exchange of GDP to GTP. It remains bound to the aminoacyl-tRNA.EF-Tu.GTP complex up to the GTP hydrolysis stage on the ribosome.</text>
</comment>
<comment type="subcellular location">
    <subcellularLocation>
        <location evidence="1">Cytoplasm</location>
    </subcellularLocation>
</comment>
<comment type="similarity">
    <text evidence="1">Belongs to the EF-Ts family.</text>
</comment>
<accession>A9NHC5</accession>